<evidence type="ECO:0000250" key="1"/>
<evidence type="ECO:0000305" key="2"/>
<proteinExistence type="inferred from homology"/>
<keyword id="KW-0333">Golgi apparatus</keyword>
<keyword id="KW-0378">Hydrolase</keyword>
<name>CPD1_PHANO</name>
<sequence length="193" mass="21405">MPGSSLWLLPPKSHRLNSILPTLIDQTSSHFGSAHRFLPHVTITSEISPSTHSPNPQAWLDSLEISSGDKIEVMFEKLASEDVFFRKLYIKCHKTEGLKKLAVLCRREVEGFGEEREAAKWATESYNPHLSLLYHDCPSIDASGLAEIEKLAQSTGVNLNGQSDLGGWSGGRLVLVPTDKSIDQWSPIAEREL</sequence>
<dbReference type="EC" id="3.1.4.37"/>
<dbReference type="EMBL" id="CH445334">
    <property type="protein sequence ID" value="EAT85717.1"/>
    <property type="molecule type" value="Genomic_DNA"/>
</dbReference>
<dbReference type="RefSeq" id="XP_001797420.1">
    <property type="nucleotide sequence ID" value="XM_001797368.1"/>
</dbReference>
<dbReference type="SMR" id="Q0UME8"/>
<dbReference type="FunCoup" id="Q0UME8">
    <property type="interactions" value="6"/>
</dbReference>
<dbReference type="STRING" id="321614.Q0UME8"/>
<dbReference type="EnsemblFungi" id="SNOT_07066">
    <property type="protein sequence ID" value="SNOT_07066"/>
    <property type="gene ID" value="SNOG_07066"/>
</dbReference>
<dbReference type="GeneID" id="5974310"/>
<dbReference type="KEGG" id="pno:SNOG_07066"/>
<dbReference type="VEuPathDB" id="FungiDB:JI435_070660"/>
<dbReference type="eggNOG" id="ENOG502S8HR">
    <property type="taxonomic scope" value="Eukaryota"/>
</dbReference>
<dbReference type="HOGENOM" id="CLU_108991_1_0_1"/>
<dbReference type="InParanoid" id="Q0UME8"/>
<dbReference type="OMA" id="WLDSIPW"/>
<dbReference type="OrthoDB" id="514292at2759"/>
<dbReference type="Proteomes" id="UP000001055">
    <property type="component" value="Unassembled WGS sequence"/>
</dbReference>
<dbReference type="GO" id="GO:0005794">
    <property type="term" value="C:Golgi apparatus"/>
    <property type="evidence" value="ECO:0007669"/>
    <property type="project" value="UniProtKB-SubCell"/>
</dbReference>
<dbReference type="GO" id="GO:0004113">
    <property type="term" value="F:2',3'-cyclic-nucleotide 3'-phosphodiesterase activity"/>
    <property type="evidence" value="ECO:0000318"/>
    <property type="project" value="GO_Central"/>
</dbReference>
<dbReference type="GO" id="GO:0009187">
    <property type="term" value="P:cyclic nucleotide metabolic process"/>
    <property type="evidence" value="ECO:0000318"/>
    <property type="project" value="GO_Central"/>
</dbReference>
<dbReference type="FunFam" id="3.90.1140.10:FF:000016">
    <property type="entry name" value="WGS project CABT00000000 data, contig 2.10"/>
    <property type="match status" value="1"/>
</dbReference>
<dbReference type="Gene3D" id="3.90.1140.10">
    <property type="entry name" value="Cyclic phosphodiesterase"/>
    <property type="match status" value="1"/>
</dbReference>
<dbReference type="InterPro" id="IPR012386">
    <property type="entry name" value="Cyclic-nucl_3Pdiesterase"/>
</dbReference>
<dbReference type="InterPro" id="IPR009097">
    <property type="entry name" value="Cyclic_Pdiesterase"/>
</dbReference>
<dbReference type="PANTHER" id="PTHR28141">
    <property type="entry name" value="2',3'-CYCLIC-NUCLEOTIDE 3'-PHOSPHODIESTERASE"/>
    <property type="match status" value="1"/>
</dbReference>
<dbReference type="PANTHER" id="PTHR28141:SF1">
    <property type="entry name" value="2',3'-CYCLIC-NUCLEOTIDE 3'-PHOSPHODIESTERASE"/>
    <property type="match status" value="1"/>
</dbReference>
<dbReference type="Pfam" id="PF07823">
    <property type="entry name" value="CPDase"/>
    <property type="match status" value="1"/>
</dbReference>
<dbReference type="SUPFAM" id="SSF55144">
    <property type="entry name" value="LigT-like"/>
    <property type="match status" value="1"/>
</dbReference>
<feature type="chain" id="PRO_0000280680" description="2',3'-cyclic-nucleotide 3'-phosphodiesterase">
    <location>
        <begin position="1"/>
        <end position="193"/>
    </location>
</feature>
<feature type="active site" description="Proton donor/acceptor" evidence="1">
    <location>
        <position position="40"/>
    </location>
</feature>
<feature type="active site" description="Proton donor/acceptor" evidence="1">
    <location>
        <position position="129"/>
    </location>
</feature>
<feature type="binding site" evidence="1">
    <location>
        <position position="42"/>
    </location>
    <ligand>
        <name>substrate</name>
    </ligand>
</feature>
<feature type="binding site" evidence="1">
    <location>
        <position position="131"/>
    </location>
    <ligand>
        <name>substrate</name>
    </ligand>
</feature>
<feature type="binding site" evidence="1">
    <location>
        <position position="134"/>
    </location>
    <ligand>
        <name>substrate</name>
    </ligand>
</feature>
<gene>
    <name type="primary">CPD1</name>
    <name type="ORF">SNOG_07066</name>
</gene>
<protein>
    <recommendedName>
        <fullName>2',3'-cyclic-nucleotide 3'-phosphodiesterase</fullName>
        <shortName>CPDase</shortName>
        <ecNumber>3.1.4.37</ecNumber>
    </recommendedName>
</protein>
<organism>
    <name type="scientific">Phaeosphaeria nodorum (strain SN15 / ATCC MYA-4574 / FGSC 10173)</name>
    <name type="common">Glume blotch fungus</name>
    <name type="synonym">Parastagonospora nodorum</name>
    <dbReference type="NCBI Taxonomy" id="321614"/>
    <lineage>
        <taxon>Eukaryota</taxon>
        <taxon>Fungi</taxon>
        <taxon>Dikarya</taxon>
        <taxon>Ascomycota</taxon>
        <taxon>Pezizomycotina</taxon>
        <taxon>Dothideomycetes</taxon>
        <taxon>Pleosporomycetidae</taxon>
        <taxon>Pleosporales</taxon>
        <taxon>Pleosporineae</taxon>
        <taxon>Phaeosphaeriaceae</taxon>
        <taxon>Parastagonospora</taxon>
    </lineage>
</organism>
<accession>Q0UME8</accession>
<comment type="function">
    <text evidence="1">Involved in the metabolism of ADP-ribose 1',2'-cyclic phosphate which is produced as a consequence of tRNA splicing.</text>
</comment>
<comment type="catalytic activity">
    <reaction>
        <text>a nucleoside 2',3'-cyclic phosphate + H2O = a nucleoside 2'-phosphate + H(+)</text>
        <dbReference type="Rhea" id="RHEA:14489"/>
        <dbReference type="ChEBI" id="CHEBI:15377"/>
        <dbReference type="ChEBI" id="CHEBI:15378"/>
        <dbReference type="ChEBI" id="CHEBI:66954"/>
        <dbReference type="ChEBI" id="CHEBI:78552"/>
        <dbReference type="EC" id="3.1.4.37"/>
    </reaction>
</comment>
<comment type="subcellular location">
    <subcellularLocation>
        <location evidence="1">Golgi apparatus</location>
    </subcellularLocation>
</comment>
<comment type="similarity">
    <text evidence="2">Belongs to the 2H phosphoesterase superfamily. CPD1 family.</text>
</comment>
<reference key="1">
    <citation type="journal article" date="2007" name="Plant Cell">
        <title>Dothideomycete-plant interactions illuminated by genome sequencing and EST analysis of the wheat pathogen Stagonospora nodorum.</title>
        <authorList>
            <person name="Hane J.K."/>
            <person name="Lowe R.G.T."/>
            <person name="Solomon P.S."/>
            <person name="Tan K.-C."/>
            <person name="Schoch C.L."/>
            <person name="Spatafora J.W."/>
            <person name="Crous P.W."/>
            <person name="Kodira C.D."/>
            <person name="Birren B.W."/>
            <person name="Galagan J.E."/>
            <person name="Torriani S.F.F."/>
            <person name="McDonald B.A."/>
            <person name="Oliver R.P."/>
        </authorList>
    </citation>
    <scope>NUCLEOTIDE SEQUENCE [LARGE SCALE GENOMIC DNA]</scope>
    <source>
        <strain>SN15 / ATCC MYA-4574 / FGSC 10173</strain>
    </source>
</reference>